<name>Y448_NITEC</name>
<comment type="similarity">
    <text evidence="1">Belongs to the UPF0301 (AlgH) family.</text>
</comment>
<protein>
    <recommendedName>
        <fullName evidence="1">UPF0301 protein Neut_0448</fullName>
    </recommendedName>
</protein>
<gene>
    <name type="ordered locus">Neut_0448</name>
</gene>
<sequence>MQAINLTDHFLIAMPRLEDSFFAKTLTYICEHNEQGALGLVVNRSTDLSVEKLLTQLGMSPQDPALSNLPVLLGGPVQVDNGFVLHEPVGAWRFTLSSNVVTGLTASIDILQAVADCQGPEKILVALGYSGWAAGQLEQELAQNAWLTVPAQSRILFELSFEERLPAAMKLLGIDFFNLSNEVGHA</sequence>
<reference key="1">
    <citation type="journal article" date="2007" name="Environ. Microbiol.">
        <title>Whole-genome analysis of the ammonia-oxidizing bacterium, Nitrosomonas eutropha C91: implications for niche adaptation.</title>
        <authorList>
            <person name="Stein L.Y."/>
            <person name="Arp D.J."/>
            <person name="Berube P.M."/>
            <person name="Chain P.S."/>
            <person name="Hauser L."/>
            <person name="Jetten M.S."/>
            <person name="Klotz M.G."/>
            <person name="Larimer F.W."/>
            <person name="Norton J.M."/>
            <person name="Op den Camp H.J.M."/>
            <person name="Shin M."/>
            <person name="Wei X."/>
        </authorList>
    </citation>
    <scope>NUCLEOTIDE SEQUENCE [LARGE SCALE GENOMIC DNA]</scope>
    <source>
        <strain>DSM 101675 / C91 / Nm57</strain>
    </source>
</reference>
<organism>
    <name type="scientific">Nitrosomonas eutropha (strain DSM 101675 / C91 / Nm57)</name>
    <dbReference type="NCBI Taxonomy" id="335283"/>
    <lineage>
        <taxon>Bacteria</taxon>
        <taxon>Pseudomonadati</taxon>
        <taxon>Pseudomonadota</taxon>
        <taxon>Betaproteobacteria</taxon>
        <taxon>Nitrosomonadales</taxon>
        <taxon>Nitrosomonadaceae</taxon>
        <taxon>Nitrosomonas</taxon>
    </lineage>
</organism>
<evidence type="ECO:0000255" key="1">
    <source>
        <dbReference type="HAMAP-Rule" id="MF_00758"/>
    </source>
</evidence>
<accession>Q0AIU6</accession>
<proteinExistence type="inferred from homology"/>
<dbReference type="EMBL" id="CP000450">
    <property type="protein sequence ID" value="ABI58725.1"/>
    <property type="molecule type" value="Genomic_DNA"/>
</dbReference>
<dbReference type="RefSeq" id="WP_011633567.1">
    <property type="nucleotide sequence ID" value="NC_008344.1"/>
</dbReference>
<dbReference type="SMR" id="Q0AIU6"/>
<dbReference type="STRING" id="335283.Neut_0448"/>
<dbReference type="KEGG" id="net:Neut_0448"/>
<dbReference type="eggNOG" id="COG1678">
    <property type="taxonomic scope" value="Bacteria"/>
</dbReference>
<dbReference type="HOGENOM" id="CLU_057596_1_0_4"/>
<dbReference type="OrthoDB" id="9807486at2"/>
<dbReference type="Proteomes" id="UP000001966">
    <property type="component" value="Chromosome"/>
</dbReference>
<dbReference type="GO" id="GO:0005829">
    <property type="term" value="C:cytosol"/>
    <property type="evidence" value="ECO:0007669"/>
    <property type="project" value="TreeGrafter"/>
</dbReference>
<dbReference type="Gene3D" id="3.40.1740.10">
    <property type="entry name" value="VC0467-like"/>
    <property type="match status" value="1"/>
</dbReference>
<dbReference type="HAMAP" id="MF_00758">
    <property type="entry name" value="UPF0301"/>
    <property type="match status" value="1"/>
</dbReference>
<dbReference type="InterPro" id="IPR003774">
    <property type="entry name" value="AlgH-like"/>
</dbReference>
<dbReference type="NCBIfam" id="NF001266">
    <property type="entry name" value="PRK00228.1-1"/>
    <property type="match status" value="1"/>
</dbReference>
<dbReference type="PANTHER" id="PTHR30327">
    <property type="entry name" value="UNCHARACTERIZED PROTEIN YQGE"/>
    <property type="match status" value="1"/>
</dbReference>
<dbReference type="PANTHER" id="PTHR30327:SF1">
    <property type="entry name" value="UPF0301 PROTEIN YQGE"/>
    <property type="match status" value="1"/>
</dbReference>
<dbReference type="Pfam" id="PF02622">
    <property type="entry name" value="DUF179"/>
    <property type="match status" value="1"/>
</dbReference>
<dbReference type="SUPFAM" id="SSF143456">
    <property type="entry name" value="VC0467-like"/>
    <property type="match status" value="1"/>
</dbReference>
<feature type="chain" id="PRO_1000046668" description="UPF0301 protein Neut_0448">
    <location>
        <begin position="1"/>
        <end position="186"/>
    </location>
</feature>